<feature type="chain" id="PRO_0000436376" description="Ankyrin repeat domain-containing protein 11">
    <location>
        <begin position="1"/>
        <end position="2643"/>
    </location>
</feature>
<feature type="repeat" description="ANK 1" evidence="2">
    <location>
        <begin position="167"/>
        <end position="196"/>
    </location>
</feature>
<feature type="repeat" description="ANK 2" evidence="2">
    <location>
        <begin position="200"/>
        <end position="229"/>
    </location>
</feature>
<feature type="repeat" description="ANK 3" evidence="2">
    <location>
        <begin position="233"/>
        <end position="262"/>
    </location>
</feature>
<feature type="repeat" description="ANK 4" evidence="2">
    <location>
        <begin position="266"/>
        <end position="292"/>
    </location>
</feature>
<feature type="region of interest" description="Disordered" evidence="3">
    <location>
        <begin position="1"/>
        <end position="90"/>
    </location>
</feature>
<feature type="region of interest" description="Disordered" evidence="3">
    <location>
        <begin position="128"/>
        <end position="170"/>
    </location>
</feature>
<feature type="region of interest" description="Disordered" evidence="3">
    <location>
        <begin position="289"/>
        <end position="365"/>
    </location>
</feature>
<feature type="region of interest" description="Disordered" evidence="3">
    <location>
        <begin position="423"/>
        <end position="504"/>
    </location>
</feature>
<feature type="region of interest" description="Disordered" evidence="3">
    <location>
        <begin position="517"/>
        <end position="651"/>
    </location>
</feature>
<feature type="region of interest" description="Disordered" evidence="3">
    <location>
        <begin position="727"/>
        <end position="805"/>
    </location>
</feature>
<feature type="region of interest" description="Disordered" evidence="3">
    <location>
        <begin position="918"/>
        <end position="962"/>
    </location>
</feature>
<feature type="region of interest" description="Disordered" evidence="3">
    <location>
        <begin position="977"/>
        <end position="1037"/>
    </location>
</feature>
<feature type="region of interest" description="Disordered" evidence="3">
    <location>
        <begin position="1051"/>
        <end position="1074"/>
    </location>
</feature>
<feature type="region of interest" description="Disordered" evidence="3">
    <location>
        <begin position="1114"/>
        <end position="1388"/>
    </location>
</feature>
<feature type="region of interest" description="Disordered" evidence="3">
    <location>
        <begin position="1420"/>
        <end position="1711"/>
    </location>
</feature>
<feature type="region of interest" description="Disordered" evidence="3">
    <location>
        <begin position="1863"/>
        <end position="1900"/>
    </location>
</feature>
<feature type="region of interest" description="Disordered" evidence="3">
    <location>
        <begin position="1981"/>
        <end position="2027"/>
    </location>
</feature>
<feature type="region of interest" description="Disordered" evidence="3">
    <location>
        <begin position="2111"/>
        <end position="2386"/>
    </location>
</feature>
<feature type="region of interest" description="Important for protein degradation" evidence="1">
    <location>
        <begin position="2349"/>
        <end position="2643"/>
    </location>
</feature>
<feature type="compositionally biased region" description="Basic and acidic residues" evidence="3">
    <location>
        <begin position="21"/>
        <end position="54"/>
    </location>
</feature>
<feature type="compositionally biased region" description="Basic and acidic residues" evidence="3">
    <location>
        <begin position="69"/>
        <end position="90"/>
    </location>
</feature>
<feature type="compositionally biased region" description="Polar residues" evidence="3">
    <location>
        <begin position="128"/>
        <end position="155"/>
    </location>
</feature>
<feature type="compositionally biased region" description="Basic and acidic residues" evidence="3">
    <location>
        <begin position="156"/>
        <end position="170"/>
    </location>
</feature>
<feature type="compositionally biased region" description="Acidic residues" evidence="3">
    <location>
        <begin position="295"/>
        <end position="305"/>
    </location>
</feature>
<feature type="compositionally biased region" description="Polar residues" evidence="3">
    <location>
        <begin position="309"/>
        <end position="320"/>
    </location>
</feature>
<feature type="compositionally biased region" description="Basic and acidic residues" evidence="3">
    <location>
        <begin position="322"/>
        <end position="335"/>
    </location>
</feature>
<feature type="compositionally biased region" description="Basic and acidic residues" evidence="3">
    <location>
        <begin position="356"/>
        <end position="365"/>
    </location>
</feature>
<feature type="compositionally biased region" description="Basic and acidic residues" evidence="3">
    <location>
        <begin position="438"/>
        <end position="451"/>
    </location>
</feature>
<feature type="compositionally biased region" description="Basic residues" evidence="3">
    <location>
        <begin position="452"/>
        <end position="462"/>
    </location>
</feature>
<feature type="compositionally biased region" description="Basic and acidic residues" evidence="3">
    <location>
        <begin position="463"/>
        <end position="475"/>
    </location>
</feature>
<feature type="compositionally biased region" description="Acidic residues" evidence="3">
    <location>
        <begin position="484"/>
        <end position="494"/>
    </location>
</feature>
<feature type="compositionally biased region" description="Low complexity" evidence="3">
    <location>
        <begin position="517"/>
        <end position="528"/>
    </location>
</feature>
<feature type="compositionally biased region" description="Basic and acidic residues" evidence="3">
    <location>
        <begin position="537"/>
        <end position="550"/>
    </location>
</feature>
<feature type="compositionally biased region" description="Polar residues" evidence="3">
    <location>
        <begin position="557"/>
        <end position="574"/>
    </location>
</feature>
<feature type="compositionally biased region" description="Low complexity" evidence="3">
    <location>
        <begin position="575"/>
        <end position="588"/>
    </location>
</feature>
<feature type="compositionally biased region" description="Basic residues" evidence="3">
    <location>
        <begin position="591"/>
        <end position="602"/>
    </location>
</feature>
<feature type="compositionally biased region" description="Basic residues" evidence="3">
    <location>
        <begin position="633"/>
        <end position="646"/>
    </location>
</feature>
<feature type="compositionally biased region" description="Basic and acidic residues" evidence="3">
    <location>
        <begin position="918"/>
        <end position="931"/>
    </location>
</feature>
<feature type="compositionally biased region" description="Basic and acidic residues" evidence="3">
    <location>
        <begin position="938"/>
        <end position="962"/>
    </location>
</feature>
<feature type="compositionally biased region" description="Basic and acidic residues" evidence="3">
    <location>
        <begin position="1133"/>
        <end position="1297"/>
    </location>
</feature>
<feature type="compositionally biased region" description="Basic and acidic residues" evidence="3">
    <location>
        <begin position="1326"/>
        <end position="1343"/>
    </location>
</feature>
<feature type="compositionally biased region" description="Basic and acidic residues" evidence="3">
    <location>
        <begin position="1355"/>
        <end position="1388"/>
    </location>
</feature>
<feature type="compositionally biased region" description="Basic and acidic residues" evidence="3">
    <location>
        <begin position="1420"/>
        <end position="1444"/>
    </location>
</feature>
<feature type="compositionally biased region" description="Basic and acidic residues" evidence="3">
    <location>
        <begin position="1464"/>
        <end position="1535"/>
    </location>
</feature>
<feature type="compositionally biased region" description="Basic and acidic residues" evidence="3">
    <location>
        <begin position="1546"/>
        <end position="1564"/>
    </location>
</feature>
<feature type="compositionally biased region" description="Basic and acidic residues" evidence="3">
    <location>
        <begin position="1577"/>
        <end position="1587"/>
    </location>
</feature>
<feature type="compositionally biased region" description="Basic and acidic residues" evidence="3">
    <location>
        <begin position="1595"/>
        <end position="1640"/>
    </location>
</feature>
<feature type="compositionally biased region" description="Polar residues" evidence="3">
    <location>
        <begin position="1678"/>
        <end position="1695"/>
    </location>
</feature>
<feature type="compositionally biased region" description="Pro residues" evidence="3">
    <location>
        <begin position="2150"/>
        <end position="2160"/>
    </location>
</feature>
<feature type="compositionally biased region" description="Pro residues" evidence="3">
    <location>
        <begin position="2175"/>
        <end position="2184"/>
    </location>
</feature>
<feature type="compositionally biased region" description="Low complexity" evidence="3">
    <location>
        <begin position="2273"/>
        <end position="2284"/>
    </location>
</feature>
<feature type="compositionally biased region" description="Basic and acidic residues" evidence="3">
    <location>
        <begin position="2297"/>
        <end position="2315"/>
    </location>
</feature>
<feature type="compositionally biased region" description="Low complexity" evidence="3">
    <location>
        <begin position="2371"/>
        <end position="2386"/>
    </location>
</feature>
<feature type="modified residue" description="Phosphoserine" evidence="11">
    <location>
        <position position="276"/>
    </location>
</feature>
<feature type="modified residue" description="Phosphoserine" evidence="1">
    <location>
        <position position="408"/>
    </location>
</feature>
<feature type="modified residue" description="Phosphothreonine" evidence="1">
    <location>
        <position position="410"/>
    </location>
</feature>
<feature type="modified residue" description="Phosphoserine" evidence="1">
    <location>
        <position position="411"/>
    </location>
</feature>
<feature type="modified residue" description="Phosphoserine" evidence="1">
    <location>
        <position position="838"/>
    </location>
</feature>
<feature type="modified residue" description="Phosphoserine" evidence="11">
    <location>
        <position position="1070"/>
    </location>
</feature>
<feature type="modified residue" description="Phosphothreonine" evidence="11">
    <location>
        <position position="1111"/>
    </location>
</feature>
<feature type="modified residue" description="Phosphoserine" evidence="11">
    <location>
        <position position="1114"/>
    </location>
</feature>
<feature type="modified residue" description="Phosphoserine" evidence="11">
    <location>
        <position position="1676"/>
    </location>
</feature>
<feature type="modified residue" description="Phosphoserine" evidence="1">
    <location>
        <position position="1777"/>
    </location>
</feature>
<feature type="modified residue" description="Phosphoserine" evidence="11">
    <location>
        <position position="1832"/>
    </location>
</feature>
<feature type="modified residue" description="Phosphotyrosine" evidence="11">
    <location>
        <position position="1835"/>
    </location>
</feature>
<feature type="modified residue" description="Phosphotyrosine" evidence="11">
    <location>
        <position position="1836"/>
    </location>
</feature>
<feature type="modified residue" description="Phosphoserine" evidence="11">
    <location>
        <position position="1837"/>
    </location>
</feature>
<feature type="modified residue" description="Phosphoserine" evidence="11">
    <location>
        <position position="1844"/>
    </location>
</feature>
<feature type="modified residue" description="Phosphoserine" evidence="1">
    <location>
        <position position="1981"/>
    </location>
</feature>
<feature type="modified residue" description="Phosphoserine" evidence="11">
    <location>
        <position position="2139"/>
    </location>
</feature>
<feature type="mutagenesis site" description="In Yoda; protein degradation is impaired. Homozygotes are embryonic lethal. Heterozygotes have reduced body size, craniofacial abnormalities, and reduced bone mineral density." evidence="4 5">
    <original>E</original>
    <variation>K</variation>
    <location>
        <position position="2502"/>
    </location>
</feature>
<feature type="sequence conflict" description="In Ref. 2; AAI58044." evidence="7" ref="2">
    <original>H</original>
    <variation>R</variation>
    <location>
        <position position="239"/>
    </location>
</feature>
<sequence length="2643" mass="296186">MPKGGCSKTPQQEDFALSNDMVEKQTGKKDKDKVSLTKTPKLDRSDGGKEVRERATKRKLPFTVGANGEQKDSDTEKQGPERKRIKKEPVARKSGLLFGMGLSGIRAGYPLSERQQVALLMQMTAEESANSPVDTTPKHPSQSTVCQKGTPNSASKTKDKVNKRNERGETRLHRAAIRGDARRIKELISEGADVNVKDFAGWTALHEACNRGYYDIAKQLLAAGAEVNTKGLDDDTPLHDAANNGHYKVVKLLLRYGGNPQQSNRKGETPLKVANSPTMVNLLLGKGTYTSSEESSTESSEEEDAPSFAPSSSVDGNNTDSEFEKGLKLKAKNPEPQKTVTPVKDEYEFDEDDEQDRVPPVDDKHLLKKDYRKEAKANSFISIPKMEVKSYSKNNTLAPKKAAHRILSDTSDEEDVSVSIGAGEKLRLSAHTMLPGSKARESSSSRQQKEKNKLKKKRKKETKGKEVRFGKRSDKFCSSGSESESSESEEDDGDSVGSSGCLKGSPLVLKDPSLFSSLSASSTSSHGSAVAQKHGSGHTDQHTKHWRTDNWKAISSPAWSEVSSLSDSSRTGLTSESDCSSEGSSVESLKPTRRKQEHRKRGVLQSAPSEKRSSFHPCTDGAVPKLDKEGKVVKKHKTKHKHKHKEKGQCSVSQELKLKSFTYEYEDSKQKSDKAILLESDLSTENKLKVLKHDREHLKKEDKLGRMKPEDKDWLFKDEKVLKRIKDANKDMSRAFREDKDRASKAERERATKDKSPKEEKLRLYKEERKKKSKDRASRLERKNDMKEDKLSKEKEKAFKEDKEKLKKEKLYREDAAFDDYCNKSQFLDHEDTKFSLSDDQQERWFSDLSDSSFDFKGEDSWDSVTDYRDIKNDSVAKLILETVKEDSKEKKRDNKIREKRDFKDSFFRKRDRDCLDKNSEKRRDQTEKHKSIPSYLSEKDKKRRESAEGGRDRRDGRIRSEEVHREDLKECGFESSFKDKSDCDFPKNLEPWERPHAAREKEKKDALEKERKEKGRADKYKEKSSERERSDKSTLDKCQKDKEFEKCFKEKKDGKEKHKDIHSKDRKASFDQLREKKEKVFSSIISEDFSERKDDRKGKEKSWYIADIFTDESEDEKDDCVAGSFKATEASDTQRVDGLPEKEEGREHPSDRHRKSSSDRQHTEKPRDKEPKEKKKDRGASEGGKDKKEKMEKIFEKHKEKKDKECAERYKDRKERASADSAPEKKNKQKLPEKVEKKHFAEDKVKSKHKEKPEKEHSRERERKPSRGPDVEKSLLEKLEEEALHDYREDSNDKISEVSSDSFADHGQEPSLSTLLEVSFSEPPAEDKARDSACLSEKLREKERHRHSSSSSKKSHERERAKKEKAEKKEKSEDYKDSISSVRKDASQFEKDFLDAETYGVSYPTKADVEEELDKAIELFSSEKKDRSDPEREPAKRIEKELKPYGSSAISILKEKKKREKHRERWREEKERHRDKHVDGFLRHHKDEPKPAAKDKDNPPNSFKEKSREESLKLSETKLKEKFKENTEREKGDSIKMSNGNDKLVPSRDSGKKDSRPREKLLGDGDLMMTSFERMLSQKDLEIEERHKRHKERMKQMEKMRHRSGDPKLKEKKPTEDGRKKSLDFPSKKALGLDKKVKEPAPTLTTGESKPHSGPGTESKDWLSGQPLKEVLPASPRTEQSRPTGVPTPTSVVSCPSYEEVMHTPRTPSCSADDYPDLVFDCTDSQHSMPVSTASTSACSPPFFDRFSVASSVVSENAAGQTPTRPISTNLYRSISVDIRRTPEEEFSAGDKLFRQQSVPAPSSFDSPVQHLLEEKAPLPPVPAEKFACLSPGYYSPDYGIPSPKVDTLHCPPTAVVSATPPPDSVFSNLPPKSSPSPRGELLSPAIEGTLPPDLGLPLDATEDQQATAAILPQEPSYLEPLDEGPFTTVITEEPVEWTHTAAEQGLSSSSLIASASENPVSWPVGSELMLKSPQRFAESPKHFCPGESLHSTTPGPYSAAEPTYPVSPGSYPLPAPEPALEEVKDGGTGAIPVAISAAEGAAPYAAPARLESFFSNCKSHPDAPLDTAPEPTGVTAVAQVEALGPLESSFLDSNPSISTLSQVEPVSWHEAFTSPEDDLDLGPFSLPELPLQAKDASDVEAEAAKASPVPPAESPPGPTGVLGGGDVPAPAAEEPPAPPPQEASPQLSTEPEPSEEPKLDVVLEATVETEVLADDSAPEASISNSVPAPSPPQQQPPGGGDEEAETEDPSATPCCAPDGPTTDGLAQAHNSAEASCVVAAAEGPPGNVQAEATDPEPKPTSEVPKAPKVEEVPQRMTRNRAQMLASQSKQGIPAAEKDPMPTPASRAKGRASEEEDAQAQHPRKRRFQRSSQQLQQQLNTSTQQTREVIQQTLAAIVDAIKLDAIEPYHSDRSNPYFEYLQIRKKIEEKRKILCCITPQAPQCYAEYVTYTGSYLLDGKPLSKLHIPVIAPPPSLAEPLKELFKQQEAVRGKLRLQHSIEREKLIVSCEQEILRVHCRAARTIANQAVPFSACTMLLDSEVYNMPLESQGDENKSVRDRFNARQFISWLQDVDDKYDRMKTCLLMRQQHEAAALNAVQRMEWQLKAQELDPAGHKSLCVNEVPSFYVPMVDVNDDFVLLPA</sequence>
<keyword id="KW-0040">ANK repeat</keyword>
<keyword id="KW-0539">Nucleus</keyword>
<keyword id="KW-0597">Phosphoprotein</keyword>
<keyword id="KW-1185">Reference proteome</keyword>
<keyword id="KW-0677">Repeat</keyword>
<protein>
    <recommendedName>
        <fullName evidence="9">Ankyrin repeat domain-containing protein 11</fullName>
    </recommendedName>
</protein>
<dbReference type="EMBL" id="AC132287">
    <property type="status" value="NOT_ANNOTATED_CDS"/>
    <property type="molecule type" value="Genomic_DNA"/>
</dbReference>
<dbReference type="EMBL" id="BC059876">
    <property type="protein sequence ID" value="AAH59876.1"/>
    <property type="molecule type" value="mRNA"/>
</dbReference>
<dbReference type="EMBL" id="BC158043">
    <property type="protein sequence ID" value="AAI58044.1"/>
    <property type="molecule type" value="mRNA"/>
</dbReference>
<dbReference type="CCDS" id="CCDS40507.2"/>
<dbReference type="RefSeq" id="NP_001074848.2">
    <property type="nucleotide sequence ID" value="NM_001081379.2"/>
</dbReference>
<dbReference type="SMR" id="E9Q4F7"/>
<dbReference type="FunCoup" id="E9Q4F7">
    <property type="interactions" value="3814"/>
</dbReference>
<dbReference type="IntAct" id="E9Q4F7">
    <property type="interactions" value="1"/>
</dbReference>
<dbReference type="MINT" id="E9Q4F7"/>
<dbReference type="STRING" id="10090.ENSMUSP00000095939"/>
<dbReference type="GlyGen" id="E9Q4F7">
    <property type="glycosylation" value="5 sites, 1 N-linked glycan (1 site), 1 O-linked glycan (1 site)"/>
</dbReference>
<dbReference type="iPTMnet" id="E9Q4F7"/>
<dbReference type="PhosphoSitePlus" id="E9Q4F7"/>
<dbReference type="jPOST" id="E9Q4F7"/>
<dbReference type="PaxDb" id="10090-ENSMUSP00000095938"/>
<dbReference type="ProteomicsDB" id="296048"/>
<dbReference type="Pumba" id="E9Q4F7"/>
<dbReference type="Antibodypedia" id="4516">
    <property type="antibodies" value="127 antibodies from 22 providers"/>
</dbReference>
<dbReference type="Ensembl" id="ENSMUST00000098334.13">
    <property type="protein sequence ID" value="ENSMUSP00000095939.6"/>
    <property type="gene ID" value="ENSMUSG00000035569.18"/>
</dbReference>
<dbReference type="GeneID" id="77087"/>
<dbReference type="KEGG" id="mmu:77087"/>
<dbReference type="UCSC" id="uc009ntz.2">
    <property type="organism name" value="mouse"/>
</dbReference>
<dbReference type="AGR" id="MGI:1924337"/>
<dbReference type="CTD" id="29123"/>
<dbReference type="MGI" id="MGI:1924337">
    <property type="gene designation" value="Ankrd11"/>
</dbReference>
<dbReference type="VEuPathDB" id="HostDB:ENSMUSG00000035569"/>
<dbReference type="eggNOG" id="ENOG502QQG5">
    <property type="taxonomic scope" value="Eukaryota"/>
</dbReference>
<dbReference type="GeneTree" id="ENSGT00940000155966"/>
<dbReference type="HOGENOM" id="CLU_229338_0_0_1"/>
<dbReference type="InParanoid" id="E9Q4F7"/>
<dbReference type="OMA" id="ADQHSKH"/>
<dbReference type="OrthoDB" id="85431at9989"/>
<dbReference type="BioGRID-ORCS" id="77087">
    <property type="hits" value="21 hits in 76 CRISPR screens"/>
</dbReference>
<dbReference type="ChiTaRS" id="Ankrd11">
    <property type="organism name" value="mouse"/>
</dbReference>
<dbReference type="PRO" id="PR:E9Q4F7"/>
<dbReference type="Proteomes" id="UP000000589">
    <property type="component" value="Chromosome 8"/>
</dbReference>
<dbReference type="RNAct" id="E9Q4F7">
    <property type="molecule type" value="protein"/>
</dbReference>
<dbReference type="Bgee" id="ENSMUSG00000035569">
    <property type="expression patterns" value="Expressed in rostral migratory stream and 230 other cell types or tissues"/>
</dbReference>
<dbReference type="ExpressionAtlas" id="E9Q4F7">
    <property type="expression patterns" value="baseline and differential"/>
</dbReference>
<dbReference type="GO" id="GO:0000785">
    <property type="term" value="C:chromatin"/>
    <property type="evidence" value="ECO:0000314"/>
    <property type="project" value="MGI"/>
</dbReference>
<dbReference type="GO" id="GO:0005634">
    <property type="term" value="C:nucleus"/>
    <property type="evidence" value="ECO:0000266"/>
    <property type="project" value="MGI"/>
</dbReference>
<dbReference type="GO" id="GO:0042803">
    <property type="term" value="F:protein homodimerization activity"/>
    <property type="evidence" value="ECO:0000314"/>
    <property type="project" value="MGI"/>
</dbReference>
<dbReference type="GO" id="GO:0060348">
    <property type="term" value="P:bone development"/>
    <property type="evidence" value="ECO:0000315"/>
    <property type="project" value="MGI"/>
</dbReference>
<dbReference type="GO" id="GO:0061307">
    <property type="term" value="P:cardiac neural crest cell differentiation involved in heart development"/>
    <property type="evidence" value="ECO:0000315"/>
    <property type="project" value="MGI"/>
</dbReference>
<dbReference type="GO" id="GO:0050890">
    <property type="term" value="P:cognition"/>
    <property type="evidence" value="ECO:0000315"/>
    <property type="project" value="MGI"/>
</dbReference>
<dbReference type="GO" id="GO:0060324">
    <property type="term" value="P:face development"/>
    <property type="evidence" value="ECO:0000315"/>
    <property type="project" value="MGI"/>
</dbReference>
<dbReference type="GO" id="GO:0060325">
    <property type="term" value="P:face morphogenesis"/>
    <property type="evidence" value="ECO:0000266"/>
    <property type="project" value="MGI"/>
</dbReference>
<dbReference type="GO" id="GO:0010467">
    <property type="term" value="P:gene expression"/>
    <property type="evidence" value="ECO:0000315"/>
    <property type="project" value="MGI"/>
</dbReference>
<dbReference type="GO" id="GO:0060322">
    <property type="term" value="P:head development"/>
    <property type="evidence" value="ECO:0000315"/>
    <property type="project" value="MGI"/>
</dbReference>
<dbReference type="GO" id="GO:0060323">
    <property type="term" value="P:head morphogenesis"/>
    <property type="evidence" value="ECO:0000315"/>
    <property type="project" value="MGI"/>
</dbReference>
<dbReference type="GO" id="GO:0060047">
    <property type="term" value="P:heart contraction"/>
    <property type="evidence" value="ECO:0000315"/>
    <property type="project" value="MGI"/>
</dbReference>
<dbReference type="GO" id="GO:0007507">
    <property type="term" value="P:heart development"/>
    <property type="evidence" value="ECO:0000315"/>
    <property type="project" value="MGI"/>
</dbReference>
<dbReference type="GO" id="GO:0001701">
    <property type="term" value="P:in utero embryonic development"/>
    <property type="evidence" value="ECO:0000315"/>
    <property type="project" value="MGI"/>
</dbReference>
<dbReference type="GO" id="GO:0051674">
    <property type="term" value="P:localization of cell"/>
    <property type="evidence" value="ECO:0000315"/>
    <property type="project" value="MGI"/>
</dbReference>
<dbReference type="GO" id="GO:0035264">
    <property type="term" value="P:multicellular organism growth"/>
    <property type="evidence" value="ECO:0000315"/>
    <property type="project" value="MGI"/>
</dbReference>
<dbReference type="GO" id="GO:0001755">
    <property type="term" value="P:neural crest cell migration"/>
    <property type="evidence" value="ECO:0000315"/>
    <property type="project" value="MGI"/>
</dbReference>
<dbReference type="GO" id="GO:0061351">
    <property type="term" value="P:neural precursor cell proliferation"/>
    <property type="evidence" value="ECO:0000315"/>
    <property type="project" value="MGI"/>
</dbReference>
<dbReference type="GO" id="GO:0022008">
    <property type="term" value="P:neurogenesis"/>
    <property type="evidence" value="ECO:0000315"/>
    <property type="project" value="MGI"/>
</dbReference>
<dbReference type="GO" id="GO:0042475">
    <property type="term" value="P:odontogenesis of dentin-containing tooth"/>
    <property type="evidence" value="ECO:0000266"/>
    <property type="project" value="MGI"/>
</dbReference>
<dbReference type="GO" id="GO:0001503">
    <property type="term" value="P:ossification"/>
    <property type="evidence" value="ECO:0000315"/>
    <property type="project" value="MGI"/>
</dbReference>
<dbReference type="GO" id="GO:0003151">
    <property type="term" value="P:outflow tract morphogenesis"/>
    <property type="evidence" value="ECO:0000315"/>
    <property type="project" value="MGI"/>
</dbReference>
<dbReference type="GO" id="GO:0010498">
    <property type="term" value="P:proteasomal protein catabolic process"/>
    <property type="evidence" value="ECO:0000315"/>
    <property type="project" value="MGI"/>
</dbReference>
<dbReference type="GO" id="GO:0030163">
    <property type="term" value="P:protein catabolic process"/>
    <property type="evidence" value="ECO:0000315"/>
    <property type="project" value="MGI"/>
</dbReference>
<dbReference type="GO" id="GO:0060021">
    <property type="term" value="P:roof of mouth development"/>
    <property type="evidence" value="ECO:0000315"/>
    <property type="project" value="MGI"/>
</dbReference>
<dbReference type="GO" id="GO:0007165">
    <property type="term" value="P:signal transduction"/>
    <property type="evidence" value="ECO:0000315"/>
    <property type="project" value="MGI"/>
</dbReference>
<dbReference type="GO" id="GO:0048705">
    <property type="term" value="P:skeletal system morphogenesis"/>
    <property type="evidence" value="ECO:0000315"/>
    <property type="project" value="MGI"/>
</dbReference>
<dbReference type="GO" id="GO:0035176">
    <property type="term" value="P:social behavior"/>
    <property type="evidence" value="ECO:0000315"/>
    <property type="project" value="MGI"/>
</dbReference>
<dbReference type="GO" id="GO:0001894">
    <property type="term" value="P:tissue homeostasis"/>
    <property type="evidence" value="ECO:0000315"/>
    <property type="project" value="MGI"/>
</dbReference>
<dbReference type="GO" id="GO:0048771">
    <property type="term" value="P:tissue remodeling"/>
    <property type="evidence" value="ECO:0000315"/>
    <property type="project" value="MGI"/>
</dbReference>
<dbReference type="FunFam" id="1.25.40.20:FF:000039">
    <property type="entry name" value="Ankyrin repeat domain-containing protein 11"/>
    <property type="match status" value="1"/>
</dbReference>
<dbReference type="Gene3D" id="1.25.40.20">
    <property type="entry name" value="Ankyrin repeat-containing domain"/>
    <property type="match status" value="1"/>
</dbReference>
<dbReference type="InterPro" id="IPR042636">
    <property type="entry name" value="ANKRD11"/>
</dbReference>
<dbReference type="InterPro" id="IPR002110">
    <property type="entry name" value="Ankyrin_rpt"/>
</dbReference>
<dbReference type="InterPro" id="IPR036770">
    <property type="entry name" value="Ankyrin_rpt-contain_sf"/>
</dbReference>
<dbReference type="PANTHER" id="PTHR24145">
    <property type="entry name" value="ANKYRIN REPEAT DOMAIN-CONTAINING PROTEIN 11"/>
    <property type="match status" value="1"/>
</dbReference>
<dbReference type="PANTHER" id="PTHR24145:SF3">
    <property type="entry name" value="ANKYRIN REPEAT DOMAIN-CONTAINING PROTEIN 11"/>
    <property type="match status" value="1"/>
</dbReference>
<dbReference type="Pfam" id="PF12796">
    <property type="entry name" value="Ank_2"/>
    <property type="match status" value="2"/>
</dbReference>
<dbReference type="SMART" id="SM00248">
    <property type="entry name" value="ANK"/>
    <property type="match status" value="3"/>
</dbReference>
<dbReference type="SUPFAM" id="SSF48403">
    <property type="entry name" value="Ankyrin repeat"/>
    <property type="match status" value="1"/>
</dbReference>
<dbReference type="PROSITE" id="PS50297">
    <property type="entry name" value="ANK_REP_REGION"/>
    <property type="match status" value="1"/>
</dbReference>
<dbReference type="PROSITE" id="PS50088">
    <property type="entry name" value="ANK_REPEAT"/>
    <property type="match status" value="3"/>
</dbReference>
<proteinExistence type="evidence at protein level"/>
<name>ANR11_MOUSE</name>
<organism evidence="10">
    <name type="scientific">Mus musculus</name>
    <name type="common">Mouse</name>
    <dbReference type="NCBI Taxonomy" id="10090"/>
    <lineage>
        <taxon>Eukaryota</taxon>
        <taxon>Metazoa</taxon>
        <taxon>Chordata</taxon>
        <taxon>Craniata</taxon>
        <taxon>Vertebrata</taxon>
        <taxon>Euteleostomi</taxon>
        <taxon>Mammalia</taxon>
        <taxon>Eutheria</taxon>
        <taxon>Euarchontoglires</taxon>
        <taxon>Glires</taxon>
        <taxon>Rodentia</taxon>
        <taxon>Myomorpha</taxon>
        <taxon>Muroidea</taxon>
        <taxon>Muridae</taxon>
        <taxon>Murinae</taxon>
        <taxon>Mus</taxon>
        <taxon>Mus</taxon>
    </lineage>
</organism>
<accession>E9Q4F7</accession>
<accession>B2RY01</accession>
<accession>Q6PB57</accession>
<comment type="function">
    <text evidence="1 4 6">Chromatin regulator which modulates histone acetylation and gene expression in neural precursor cells (PubMed:25556659). May recruit histone deacetylases (HDACs) to the p160 coactivators/nuclear receptor complex to inhibit ligand-dependent transactivation (By similarity). Has a role in proliferation and development of cortical neural precursors (PubMed:25556659). May also regulate bone homeostasis (PubMed:17986521).</text>
</comment>
<comment type="subunit">
    <text evidence="1">Interacts with the PAS region of the p160 coactivators.</text>
</comment>
<comment type="subcellular location">
    <subcellularLocation>
        <location evidence="5">Nucleus</location>
    </subcellularLocation>
    <text evidence="1">Localizes to chromatin during prometaphase (By similarity).</text>
</comment>
<comment type="developmental stage">
    <text evidence="6">Detected in the cerebral cortex from embryonic stage 11 dpc through to postnatal stage P3, where it is primarily expressed in neural precursors.</text>
</comment>
<comment type="PTM">
    <text evidence="5">Subject to proteasomal degradation which is probably essential to regulate its activity.</text>
</comment>
<evidence type="ECO:0000250" key="1">
    <source>
        <dbReference type="UniProtKB" id="Q6UB99"/>
    </source>
</evidence>
<evidence type="ECO:0000255" key="2"/>
<evidence type="ECO:0000256" key="3">
    <source>
        <dbReference type="SAM" id="MobiDB-lite"/>
    </source>
</evidence>
<evidence type="ECO:0000269" key="4">
    <source>
    </source>
</evidence>
<evidence type="ECO:0000269" key="5">
    <source>
    </source>
</evidence>
<evidence type="ECO:0000269" key="6">
    <source>
    </source>
</evidence>
<evidence type="ECO:0000305" key="7"/>
<evidence type="ECO:0000312" key="8">
    <source>
        <dbReference type="EMBL" id="AAH59876.1"/>
    </source>
</evidence>
<evidence type="ECO:0000312" key="9">
    <source>
        <dbReference type="MGI" id="MGI:1924337"/>
    </source>
</evidence>
<evidence type="ECO:0000312" key="10">
    <source>
        <dbReference type="Proteomes" id="UP000000589"/>
    </source>
</evidence>
<evidence type="ECO:0007744" key="11">
    <source>
    </source>
</evidence>
<reference evidence="10" key="1">
    <citation type="journal article" date="2009" name="PLoS Biol.">
        <title>Lineage-specific biology revealed by a finished genome assembly of the mouse.</title>
        <authorList>
            <person name="Church D.M."/>
            <person name="Goodstadt L."/>
            <person name="Hillier L.W."/>
            <person name="Zody M.C."/>
            <person name="Goldstein S."/>
            <person name="She X."/>
            <person name="Bult C.J."/>
            <person name="Agarwala R."/>
            <person name="Cherry J.L."/>
            <person name="DiCuccio M."/>
            <person name="Hlavina W."/>
            <person name="Kapustin Y."/>
            <person name="Meric P."/>
            <person name="Maglott D."/>
            <person name="Birtle Z."/>
            <person name="Marques A.C."/>
            <person name="Graves T."/>
            <person name="Zhou S."/>
            <person name="Teague B."/>
            <person name="Potamousis K."/>
            <person name="Churas C."/>
            <person name="Place M."/>
            <person name="Herschleb J."/>
            <person name="Runnheim R."/>
            <person name="Forrest D."/>
            <person name="Amos-Landgraf J."/>
            <person name="Schwartz D.C."/>
            <person name="Cheng Z."/>
            <person name="Lindblad-Toh K."/>
            <person name="Eichler E.E."/>
            <person name="Ponting C.P."/>
        </authorList>
    </citation>
    <scope>NUCLEOTIDE SEQUENCE [LARGE SCALE GENOMIC DNA]</scope>
    <source>
        <strain evidence="10">C57BL/6J</strain>
    </source>
</reference>
<reference evidence="8" key="2">
    <citation type="journal article" date="2004" name="Genome Res.">
        <title>The status, quality, and expansion of the NIH full-length cDNA project: the Mammalian Gene Collection (MGC).</title>
        <authorList>
            <consortium name="The MGC Project Team"/>
        </authorList>
    </citation>
    <scope>NUCLEOTIDE SEQUENCE [LARGE SCALE MRNA]</scope>
    <source>
        <strain evidence="8">C57BL/6J</strain>
        <tissue evidence="8">Brain</tissue>
    </source>
</reference>
<reference evidence="7" key="3">
    <citation type="journal article" date="2008" name="Physiol. Genomics">
        <title>An ENU-induced mutation in the Ankrd11 gene results in an osteopenia-like phenotype in the mouse mutant Yoda.</title>
        <authorList>
            <person name="Barbaric I."/>
            <person name="Perry M.J."/>
            <person name="Dear T.N."/>
            <person name="Rodrigues Da Costa A."/>
            <person name="Salopek D."/>
            <person name="Marusic A."/>
            <person name="Hough T."/>
            <person name="Wells S."/>
            <person name="Hunter A.J."/>
            <person name="Cheeseman M."/>
            <person name="Brown S.D."/>
        </authorList>
    </citation>
    <scope>FUNCTION</scope>
    <scope>MUTAGENESIS OF GLU-2502</scope>
</reference>
<reference key="4">
    <citation type="journal article" date="2010" name="Cell">
        <title>A tissue-specific atlas of mouse protein phosphorylation and expression.</title>
        <authorList>
            <person name="Huttlin E.L."/>
            <person name="Jedrychowski M.P."/>
            <person name="Elias J.E."/>
            <person name="Goswami T."/>
            <person name="Rad R."/>
            <person name="Beausoleil S.A."/>
            <person name="Villen J."/>
            <person name="Haas W."/>
            <person name="Sowa M.E."/>
            <person name="Gygi S.P."/>
        </authorList>
    </citation>
    <scope>PHOSPHORYLATION [LARGE SCALE ANALYSIS] AT SER-276; SER-1070; THR-1111; SER-1114; SER-1676; SER-1832; TYR-1835; TYR-1836; SER-1837; SER-1844 AND SER-2139</scope>
    <scope>IDENTIFICATION BY MASS SPECTROMETRY [LARGE SCALE ANALYSIS]</scope>
    <source>
        <tissue>Brain</tissue>
        <tissue>Kidney</tissue>
        <tissue>Liver</tissue>
        <tissue>Lung</tissue>
        <tissue>Spleen</tissue>
        <tissue>Testis</tissue>
    </source>
</reference>
<reference evidence="7" key="5">
    <citation type="journal article" date="2015" name="Dev. Cell">
        <title>Ankrd11 is a chromatin regulator involved in autism that is essential for neural development.</title>
        <authorList>
            <person name="Gallagher D."/>
            <person name="Voronova A."/>
            <person name="Zander M.A."/>
            <person name="Cancino G.I."/>
            <person name="Bramall A."/>
            <person name="Krause M.P."/>
            <person name="Abad C."/>
            <person name="Tekin M."/>
            <person name="Neilsen P.M."/>
            <person name="Callen D.F."/>
            <person name="Scherer S.W."/>
            <person name="Keller G.M."/>
            <person name="Kaplan D.R."/>
            <person name="Walz K."/>
            <person name="Miller F.D."/>
        </authorList>
    </citation>
    <scope>FUNCTION</scope>
    <scope>DEVELOPMENTAL STAGE</scope>
</reference>
<reference evidence="7" key="6">
    <citation type="journal article" date="2015" name="Hum. Genet.">
        <title>Characterization of ANKRD11 mutations in humans and mice related to KBG syndrome.</title>
        <authorList>
            <person name="Walz K."/>
            <person name="Cohen D."/>
            <person name="Neilsen P.M."/>
            <person name="Foster J. II"/>
            <person name="Brancati F."/>
            <person name="Demir K."/>
            <person name="Fisher R."/>
            <person name="Moffat M."/>
            <person name="Verbeek N.E."/>
            <person name="Bjoergo K."/>
            <person name="Lo Castro A."/>
            <person name="Curatolo P."/>
            <person name="Novelli G."/>
            <person name="Abad C."/>
            <person name="Lei C."/>
            <person name="Zhang L."/>
            <person name="Diaz-Horta O."/>
            <person name="Young J.I."/>
            <person name="Callen D.F."/>
            <person name="Tekin M."/>
        </authorList>
    </citation>
    <scope>SUBCELLULAR LOCATION</scope>
    <scope>PROTEASOMAL DEGRADATION</scope>
    <scope>MUTAGENESIS OF GLU-2502</scope>
</reference>
<gene>
    <name evidence="9" type="primary">Ankrd11</name>
</gene>